<evidence type="ECO:0000255" key="1">
    <source>
        <dbReference type="HAMAP-Rule" id="MF_00678"/>
    </source>
</evidence>
<protein>
    <recommendedName>
        <fullName evidence="1">UPF0262 protein BMEA_A0286</fullName>
    </recommendedName>
</protein>
<proteinExistence type="inferred from homology"/>
<organism>
    <name type="scientific">Brucella melitensis biotype 2 (strain ATCC 23457)</name>
    <dbReference type="NCBI Taxonomy" id="546272"/>
    <lineage>
        <taxon>Bacteria</taxon>
        <taxon>Pseudomonadati</taxon>
        <taxon>Pseudomonadota</taxon>
        <taxon>Alphaproteobacteria</taxon>
        <taxon>Hyphomicrobiales</taxon>
        <taxon>Brucellaceae</taxon>
        <taxon>Brucella/Ochrobactrum group</taxon>
        <taxon>Brucella</taxon>
    </lineage>
</organism>
<feature type="chain" id="PRO_1000147708" description="UPF0262 protein BMEA_A0286">
    <location>
        <begin position="1"/>
        <end position="160"/>
    </location>
</feature>
<comment type="similarity">
    <text evidence="1">Belongs to the UPF0262 family.</text>
</comment>
<name>Y286_BRUMB</name>
<reference key="1">
    <citation type="submission" date="2009-03" db="EMBL/GenBank/DDBJ databases">
        <title>Brucella melitensis ATCC 23457 whole genome shotgun sequencing project.</title>
        <authorList>
            <person name="Setubal J.C."/>
            <person name="Boyle S."/>
            <person name="Crasta O.R."/>
            <person name="Gillespie J.J."/>
            <person name="Kenyon R.W."/>
            <person name="Lu J."/>
            <person name="Mane S."/>
            <person name="Nagrani S."/>
            <person name="Shallom J.M."/>
            <person name="Shallom S."/>
            <person name="Shukla M."/>
            <person name="Snyder E.E."/>
            <person name="Sobral B.W."/>
            <person name="Wattam A.R."/>
            <person name="Will R."/>
            <person name="Williams K."/>
            <person name="Yoo H."/>
            <person name="Munk C."/>
            <person name="Tapia R."/>
            <person name="Han C."/>
            <person name="Detter J.C."/>
            <person name="Bruce D."/>
            <person name="Brettin T.S."/>
        </authorList>
    </citation>
    <scope>NUCLEOTIDE SEQUENCE [LARGE SCALE GENOMIC DNA]</scope>
    <source>
        <strain>ATCC 23457</strain>
    </source>
</reference>
<gene>
    <name type="ordered locus">BMEA_A0286</name>
</gene>
<sequence length="160" mass="18129">MTADVPNARLVDVELDESIGRSTPDVEHERAVAIFDLIEENSFHPVGDQKGGPYRLKLSLMESRLIFSITRENGDAVATHILSLTPLRRVVRDYFMICESYYQAIRSATPSKIEAIDMGRRGLHNEGSQTLQARLKGKIEVDFDTARRLFTLVCVLHWRG</sequence>
<accession>C0RGX4</accession>
<dbReference type="EMBL" id="CP001488">
    <property type="protein sequence ID" value="ACO00082.1"/>
    <property type="molecule type" value="Genomic_DNA"/>
</dbReference>
<dbReference type="RefSeq" id="WP_002965533.1">
    <property type="nucleotide sequence ID" value="NC_012441.1"/>
</dbReference>
<dbReference type="KEGG" id="bmi:BMEA_A0286"/>
<dbReference type="HOGENOM" id="CLU_112904_0_0_5"/>
<dbReference type="Proteomes" id="UP000001748">
    <property type="component" value="Chromosome I"/>
</dbReference>
<dbReference type="HAMAP" id="MF_00678">
    <property type="entry name" value="UPF0262"/>
    <property type="match status" value="1"/>
</dbReference>
<dbReference type="InterPro" id="IPR008321">
    <property type="entry name" value="UCP032146"/>
</dbReference>
<dbReference type="NCBIfam" id="NF002769">
    <property type="entry name" value="PRK02853.1"/>
    <property type="match status" value="1"/>
</dbReference>
<dbReference type="Pfam" id="PF06793">
    <property type="entry name" value="UPF0262"/>
    <property type="match status" value="1"/>
</dbReference>
<dbReference type="PIRSF" id="PIRSF032146">
    <property type="entry name" value="UCP032146"/>
    <property type="match status" value="1"/>
</dbReference>